<protein>
    <recommendedName>
        <fullName evidence="1">Energy-coupling factor transporter transmembrane protein EcfT</fullName>
        <shortName evidence="1">ECF transporter T component EcfT</shortName>
    </recommendedName>
</protein>
<comment type="function">
    <text evidence="1">Transmembrane (T) component of an energy-coupling factor (ECF) ABC-transporter complex. Unlike classic ABC transporters this ECF transporter provides the energy necessary to transport a number of different substrates.</text>
</comment>
<comment type="subunit">
    <text evidence="1">Forms a stable energy-coupling factor (ECF) transporter complex composed of 2 membrane-embedded substrate-binding proteins (S component), 2 ATP-binding proteins (A component) and 2 transmembrane proteins (T component). May be able to interact with more than 1 S component at a time (By similarity).</text>
</comment>
<comment type="subcellular location">
    <subcellularLocation>
        <location evidence="1">Cell membrane</location>
        <topology evidence="1">Multi-pass membrane protein</topology>
    </subcellularLocation>
</comment>
<comment type="similarity">
    <text evidence="1">Belongs to the energy-coupling factor EcfT family.</text>
</comment>
<organism>
    <name type="scientific">Thermanaerovibrio acidaminovorans (strain ATCC 49978 / DSM 6589 / Su883)</name>
    <name type="common">Selenomonas acidaminovorans</name>
    <dbReference type="NCBI Taxonomy" id="525903"/>
    <lineage>
        <taxon>Bacteria</taxon>
        <taxon>Thermotogati</taxon>
        <taxon>Synergistota</taxon>
        <taxon>Synergistia</taxon>
        <taxon>Synergistales</taxon>
        <taxon>Synergistaceae</taxon>
        <taxon>Thermanaerovibrio</taxon>
    </lineage>
</organism>
<accession>D1B5U2</accession>
<keyword id="KW-1003">Cell membrane</keyword>
<keyword id="KW-0472">Membrane</keyword>
<keyword id="KW-1185">Reference proteome</keyword>
<keyword id="KW-0812">Transmembrane</keyword>
<keyword id="KW-1133">Transmembrane helix</keyword>
<keyword id="KW-0813">Transport</keyword>
<name>ECFT_THEAS</name>
<feature type="chain" id="PRO_0000409002" description="Energy-coupling factor transporter transmembrane protein EcfT">
    <location>
        <begin position="1"/>
        <end position="269"/>
    </location>
</feature>
<feature type="transmembrane region" description="Helical" evidence="1">
    <location>
        <begin position="45"/>
        <end position="65"/>
    </location>
</feature>
<feature type="transmembrane region" description="Helical" evidence="1">
    <location>
        <begin position="75"/>
        <end position="95"/>
    </location>
</feature>
<feature type="transmembrane region" description="Helical" evidence="1">
    <location>
        <begin position="110"/>
        <end position="130"/>
    </location>
</feature>
<feature type="transmembrane region" description="Helical" evidence="1">
    <location>
        <begin position="153"/>
        <end position="173"/>
    </location>
</feature>
<feature type="transmembrane region" description="Helical" evidence="1">
    <location>
        <begin position="202"/>
        <end position="222"/>
    </location>
</feature>
<feature type="transmembrane region" description="Helical" evidence="1">
    <location>
        <begin position="244"/>
        <end position="264"/>
    </location>
</feature>
<sequence length="269" mass="29901">MSISEKVTLGQYVPADSPVHSLDPRTKILSTLVLLFALFGVRDPRFFLGWGVLLAFIVFLSRVSLRTVLRSVRPVLWLLVFTVLLHALFTPGEAILRFHFIKVSREGLHMAALMGVRLVLLVAFAGLLTLTTSPMELADGMESLMSPLARVRFPAHEMAMMMTIALRFIPTLLEETDRILKAQISRGADLEGGGVVKRLRAFVPVLVPLFLIVFQRAEDLALAMESRCYVGGVGRTRMRPLRWCLEDWVALGLMSVSVAGLLFLERAVG</sequence>
<reference key="1">
    <citation type="journal article" date="2009" name="Stand. Genomic Sci.">
        <title>Complete genome sequence of Thermanaerovibrio acidaminovorans type strain (Su883).</title>
        <authorList>
            <person name="Chovatia M."/>
            <person name="Sikorski J."/>
            <person name="Schroder M."/>
            <person name="Lapidus A."/>
            <person name="Nolan M."/>
            <person name="Tice H."/>
            <person name="Glavina Del Rio T."/>
            <person name="Copeland A."/>
            <person name="Cheng J.F."/>
            <person name="Lucas S."/>
            <person name="Chen F."/>
            <person name="Bruce D."/>
            <person name="Goodwin L."/>
            <person name="Pitluck S."/>
            <person name="Ivanova N."/>
            <person name="Mavromatis K."/>
            <person name="Ovchinnikova G."/>
            <person name="Pati A."/>
            <person name="Chen A."/>
            <person name="Palaniappan K."/>
            <person name="Land M."/>
            <person name="Hauser L."/>
            <person name="Chang Y.J."/>
            <person name="Jeffries C.D."/>
            <person name="Chain P."/>
            <person name="Saunders E."/>
            <person name="Detter J.C."/>
            <person name="Brettin T."/>
            <person name="Rohde M."/>
            <person name="Goker M."/>
            <person name="Spring S."/>
            <person name="Bristow J."/>
            <person name="Markowitz V."/>
            <person name="Hugenholtz P."/>
            <person name="Kyrpides N.C."/>
            <person name="Klenk H.P."/>
            <person name="Eisen J.A."/>
        </authorList>
    </citation>
    <scope>NUCLEOTIDE SEQUENCE [LARGE SCALE GENOMIC DNA]</scope>
    <source>
        <strain>ATCC 49978 / DSM 6589 / Su883</strain>
    </source>
</reference>
<dbReference type="EMBL" id="CP001818">
    <property type="protein sequence ID" value="ACZ19383.1"/>
    <property type="molecule type" value="Genomic_DNA"/>
</dbReference>
<dbReference type="RefSeq" id="WP_012869898.1">
    <property type="nucleotide sequence ID" value="NC_013522.1"/>
</dbReference>
<dbReference type="RefSeq" id="YP_003317665.1">
    <property type="nucleotide sequence ID" value="NC_013522.1"/>
</dbReference>
<dbReference type="SMR" id="D1B5U2"/>
<dbReference type="STRING" id="525903.Taci_1151"/>
<dbReference type="EnsemblBacteria" id="ACZ19383">
    <property type="protein sequence ID" value="ACZ19383"/>
    <property type="gene ID" value="Taci_1151"/>
</dbReference>
<dbReference type="KEGG" id="tai:Taci_1151"/>
<dbReference type="PATRIC" id="fig|525903.6.peg.1151"/>
<dbReference type="eggNOG" id="COG0619">
    <property type="taxonomic scope" value="Bacteria"/>
</dbReference>
<dbReference type="HOGENOM" id="CLU_056469_2_2_0"/>
<dbReference type="OrthoDB" id="8075495at2"/>
<dbReference type="Proteomes" id="UP000002030">
    <property type="component" value="Chromosome"/>
</dbReference>
<dbReference type="GO" id="GO:0005886">
    <property type="term" value="C:plasma membrane"/>
    <property type="evidence" value="ECO:0007669"/>
    <property type="project" value="UniProtKB-SubCell"/>
</dbReference>
<dbReference type="GO" id="GO:0022857">
    <property type="term" value="F:transmembrane transporter activity"/>
    <property type="evidence" value="ECO:0007669"/>
    <property type="project" value="UniProtKB-UniRule"/>
</dbReference>
<dbReference type="CDD" id="cd16914">
    <property type="entry name" value="EcfT"/>
    <property type="match status" value="1"/>
</dbReference>
<dbReference type="HAMAP" id="MF_01461">
    <property type="entry name" value="EcfT"/>
    <property type="match status" value="1"/>
</dbReference>
<dbReference type="InterPro" id="IPR003339">
    <property type="entry name" value="ABC/ECF_trnsptr_transmembrane"/>
</dbReference>
<dbReference type="InterPro" id="IPR051611">
    <property type="entry name" value="ECF_transporter_component"/>
</dbReference>
<dbReference type="InterPro" id="IPR024919">
    <property type="entry name" value="EcfT"/>
</dbReference>
<dbReference type="PANTHER" id="PTHR34857">
    <property type="entry name" value="SLL0384 PROTEIN"/>
    <property type="match status" value="1"/>
</dbReference>
<dbReference type="PANTHER" id="PTHR34857:SF2">
    <property type="entry name" value="SLL0384 PROTEIN"/>
    <property type="match status" value="1"/>
</dbReference>
<dbReference type="Pfam" id="PF02361">
    <property type="entry name" value="CbiQ"/>
    <property type="match status" value="1"/>
</dbReference>
<proteinExistence type="inferred from homology"/>
<evidence type="ECO:0000255" key="1">
    <source>
        <dbReference type="HAMAP-Rule" id="MF_01461"/>
    </source>
</evidence>
<gene>
    <name evidence="1" type="primary">ecfT</name>
    <name type="ordered locus">Taci_1151</name>
</gene>